<protein>
    <recommendedName>
        <fullName evidence="1">S-methyl-5'-thioadenosine phosphorylase</fullName>
        <ecNumber evidence="1">2.4.2.28</ecNumber>
    </recommendedName>
    <alternativeName>
        <fullName evidence="1">5'-methylthioadenosine phosphorylase</fullName>
        <shortName evidence="1">MTA phosphorylase</shortName>
        <shortName evidence="1">MTAP</shortName>
    </alternativeName>
</protein>
<dbReference type="EC" id="2.4.2.28" evidence="1"/>
<dbReference type="EMBL" id="AE017126">
    <property type="protein sequence ID" value="AAP99378.1"/>
    <property type="molecule type" value="Genomic_DNA"/>
</dbReference>
<dbReference type="RefSeq" id="NP_874726.1">
    <property type="nucleotide sequence ID" value="NC_005042.1"/>
</dbReference>
<dbReference type="RefSeq" id="WP_011124487.1">
    <property type="nucleotide sequence ID" value="NC_005042.1"/>
</dbReference>
<dbReference type="SMR" id="Q7VDN6"/>
<dbReference type="STRING" id="167539.Pro_0332"/>
<dbReference type="EnsemblBacteria" id="AAP99378">
    <property type="protein sequence ID" value="AAP99378"/>
    <property type="gene ID" value="Pro_0332"/>
</dbReference>
<dbReference type="KEGG" id="pma:Pro_0332"/>
<dbReference type="PATRIC" id="fig|167539.5.peg.341"/>
<dbReference type="eggNOG" id="COG0005">
    <property type="taxonomic scope" value="Bacteria"/>
</dbReference>
<dbReference type="HOGENOM" id="CLU_054456_0_1_3"/>
<dbReference type="OrthoDB" id="1523230at2"/>
<dbReference type="UniPathway" id="UPA00904">
    <property type="reaction ID" value="UER00873"/>
</dbReference>
<dbReference type="Proteomes" id="UP000001420">
    <property type="component" value="Chromosome"/>
</dbReference>
<dbReference type="GO" id="GO:0005829">
    <property type="term" value="C:cytosol"/>
    <property type="evidence" value="ECO:0007669"/>
    <property type="project" value="TreeGrafter"/>
</dbReference>
<dbReference type="GO" id="GO:0017061">
    <property type="term" value="F:S-methyl-5-thioadenosine phosphorylase activity"/>
    <property type="evidence" value="ECO:0007669"/>
    <property type="project" value="UniProtKB-UniRule"/>
</dbReference>
<dbReference type="GO" id="GO:0019509">
    <property type="term" value="P:L-methionine salvage from methylthioadenosine"/>
    <property type="evidence" value="ECO:0007669"/>
    <property type="project" value="UniProtKB-UniRule"/>
</dbReference>
<dbReference type="GO" id="GO:0006166">
    <property type="term" value="P:purine ribonucleoside salvage"/>
    <property type="evidence" value="ECO:0007669"/>
    <property type="project" value="UniProtKB-KW"/>
</dbReference>
<dbReference type="CDD" id="cd09010">
    <property type="entry name" value="MTAP_SsMTAPII_like_MTIP"/>
    <property type="match status" value="1"/>
</dbReference>
<dbReference type="FunFam" id="3.40.50.1580:FF:000012">
    <property type="entry name" value="Probable 6-oxopurine nucleoside phosphorylase"/>
    <property type="match status" value="1"/>
</dbReference>
<dbReference type="Gene3D" id="3.40.50.1580">
    <property type="entry name" value="Nucleoside phosphorylase domain"/>
    <property type="match status" value="1"/>
</dbReference>
<dbReference type="HAMAP" id="MF_01963">
    <property type="entry name" value="MTAP"/>
    <property type="match status" value="1"/>
</dbReference>
<dbReference type="InterPro" id="IPR010044">
    <property type="entry name" value="MTAP"/>
</dbReference>
<dbReference type="InterPro" id="IPR000845">
    <property type="entry name" value="Nucleoside_phosphorylase_d"/>
</dbReference>
<dbReference type="InterPro" id="IPR035994">
    <property type="entry name" value="Nucleoside_phosphorylase_sf"/>
</dbReference>
<dbReference type="InterPro" id="IPR018099">
    <property type="entry name" value="Purine_phosphorylase-2_CS"/>
</dbReference>
<dbReference type="NCBIfam" id="TIGR01694">
    <property type="entry name" value="MTAP"/>
    <property type="match status" value="1"/>
</dbReference>
<dbReference type="PANTHER" id="PTHR42679">
    <property type="entry name" value="S-METHYL-5'-THIOADENOSINE PHOSPHORYLASE"/>
    <property type="match status" value="1"/>
</dbReference>
<dbReference type="PANTHER" id="PTHR42679:SF2">
    <property type="entry name" value="S-METHYL-5'-THIOADENOSINE PHOSPHORYLASE"/>
    <property type="match status" value="1"/>
</dbReference>
<dbReference type="Pfam" id="PF01048">
    <property type="entry name" value="PNP_UDP_1"/>
    <property type="match status" value="1"/>
</dbReference>
<dbReference type="SUPFAM" id="SSF53167">
    <property type="entry name" value="Purine and uridine phosphorylases"/>
    <property type="match status" value="1"/>
</dbReference>
<dbReference type="PROSITE" id="PS01240">
    <property type="entry name" value="PNP_MTAP_2"/>
    <property type="match status" value="1"/>
</dbReference>
<feature type="chain" id="PRO_0000415097" description="S-methyl-5'-thioadenosine phosphorylase">
    <location>
        <begin position="1"/>
        <end position="314"/>
    </location>
</feature>
<feature type="binding site" evidence="1">
    <location>
        <position position="31"/>
    </location>
    <ligand>
        <name>phosphate</name>
        <dbReference type="ChEBI" id="CHEBI:43474"/>
    </ligand>
</feature>
<feature type="binding site" evidence="1">
    <location>
        <begin position="73"/>
        <end position="74"/>
    </location>
    <ligand>
        <name>phosphate</name>
        <dbReference type="ChEBI" id="CHEBI:43474"/>
    </ligand>
</feature>
<feature type="binding site" evidence="1">
    <location>
        <begin position="106"/>
        <end position="107"/>
    </location>
    <ligand>
        <name>phosphate</name>
        <dbReference type="ChEBI" id="CHEBI:43474"/>
    </ligand>
</feature>
<feature type="binding site" evidence="1">
    <location>
        <position position="207"/>
    </location>
    <ligand>
        <name>substrate</name>
    </ligand>
</feature>
<feature type="binding site" evidence="1">
    <location>
        <position position="208"/>
    </location>
    <ligand>
        <name>phosphate</name>
        <dbReference type="ChEBI" id="CHEBI:43474"/>
    </ligand>
</feature>
<feature type="binding site" evidence="1">
    <location>
        <begin position="231"/>
        <end position="233"/>
    </location>
    <ligand>
        <name>substrate</name>
    </ligand>
</feature>
<feature type="site" description="Important for substrate specificity" evidence="1">
    <location>
        <position position="189"/>
    </location>
</feature>
<feature type="site" description="Important for substrate specificity" evidence="1">
    <location>
        <position position="244"/>
    </location>
</feature>
<comment type="function">
    <text evidence="1">Catalyzes the reversible phosphorylation of S-methyl-5'-thioadenosine (MTA) to adenine and 5-methylthioribose-1-phosphate. Involved in the breakdown of MTA, a major by-product of polyamine biosynthesis. Responsible for the first step in the methionine salvage pathway after MTA has been generated from S-adenosylmethionine. Has broad substrate specificity with 6-aminopurine nucleosides as preferred substrates.</text>
</comment>
<comment type="catalytic activity">
    <reaction evidence="1">
        <text>S-methyl-5'-thioadenosine + phosphate = 5-(methylsulfanyl)-alpha-D-ribose 1-phosphate + adenine</text>
        <dbReference type="Rhea" id="RHEA:11852"/>
        <dbReference type="ChEBI" id="CHEBI:16708"/>
        <dbReference type="ChEBI" id="CHEBI:17509"/>
        <dbReference type="ChEBI" id="CHEBI:43474"/>
        <dbReference type="ChEBI" id="CHEBI:58533"/>
        <dbReference type="EC" id="2.4.2.28"/>
    </reaction>
</comment>
<comment type="pathway">
    <text evidence="1">Amino-acid biosynthesis; L-methionine biosynthesis via salvage pathway; S-methyl-5-thio-alpha-D-ribose 1-phosphate from S-methyl-5'-thioadenosine (phosphorylase route): step 1/1.</text>
</comment>
<comment type="subunit">
    <text evidence="1">Homohexamer. Dimer of a homotrimer.</text>
</comment>
<comment type="similarity">
    <text evidence="1">Belongs to the PNP/MTAP phosphorylase family. MTAP subfamily.</text>
</comment>
<reference key="1">
    <citation type="journal article" date="2003" name="Proc. Natl. Acad. Sci. U.S.A.">
        <title>Genome sequence of the cyanobacterium Prochlorococcus marinus SS120, a nearly minimal oxyphototrophic genome.</title>
        <authorList>
            <person name="Dufresne A."/>
            <person name="Salanoubat M."/>
            <person name="Partensky F."/>
            <person name="Artiguenave F."/>
            <person name="Axmann I.M."/>
            <person name="Barbe V."/>
            <person name="Duprat S."/>
            <person name="Galperin M.Y."/>
            <person name="Koonin E.V."/>
            <person name="Le Gall F."/>
            <person name="Makarova K.S."/>
            <person name="Ostrowski M."/>
            <person name="Oztas S."/>
            <person name="Robert C."/>
            <person name="Rogozin I.B."/>
            <person name="Scanlan D.J."/>
            <person name="Tandeau de Marsac N."/>
            <person name="Weissenbach J."/>
            <person name="Wincker P."/>
            <person name="Wolf Y.I."/>
            <person name="Hess W.R."/>
        </authorList>
    </citation>
    <scope>NUCLEOTIDE SEQUENCE [LARGE SCALE GENOMIC DNA]</scope>
    <source>
        <strain>SARG / CCMP1375 / SS120</strain>
    </source>
</reference>
<evidence type="ECO:0000255" key="1">
    <source>
        <dbReference type="HAMAP-Rule" id="MF_01963"/>
    </source>
</evidence>
<sequence length="314" mass="35041">MINKHFSSEEIEQDGKSCLLKNARLGVLGGSGLYSIDSIENIKELDIETPYGKPSDSLRIGNLGGMEVVFLARHGRHHIYTPTEIPYRANIWALRSLNVRWILSPSAVGSLQEQVRPLDMVVPDQFIDRTHQRPLTFFCDGAVAHVTMADPFCPTLSRLLAEEGELLMPEARQVHKGGTYLAMEGPAFSTRAESQLYRSWGCKVIGMTNHTEARLAREAEIAYTSLSMVTDYDCWHEGFGNVSVDLVIENLAANAKLASKIVEATAKRISKLLPPSEAHTALKNSLMTSKDKVSETTREKINLFTENYWGKFNK</sequence>
<gene>
    <name evidence="1" type="primary">mtnP</name>
    <name type="ordered locus">Pro_0332</name>
</gene>
<name>MTAP_PROMA</name>
<accession>Q7VDN6</accession>
<organism>
    <name type="scientific">Prochlorococcus marinus (strain SARG / CCMP1375 / SS120)</name>
    <dbReference type="NCBI Taxonomy" id="167539"/>
    <lineage>
        <taxon>Bacteria</taxon>
        <taxon>Bacillati</taxon>
        <taxon>Cyanobacteriota</taxon>
        <taxon>Cyanophyceae</taxon>
        <taxon>Synechococcales</taxon>
        <taxon>Prochlorococcaceae</taxon>
        <taxon>Prochlorococcus</taxon>
    </lineage>
</organism>
<proteinExistence type="inferred from homology"/>
<keyword id="KW-0328">Glycosyltransferase</keyword>
<keyword id="KW-0660">Purine salvage</keyword>
<keyword id="KW-1185">Reference proteome</keyword>
<keyword id="KW-0808">Transferase</keyword>